<dbReference type="EC" id="3.1.26.11" evidence="1"/>
<dbReference type="EMBL" id="CP001400">
    <property type="protein sequence ID" value="ACP37939.1"/>
    <property type="molecule type" value="Genomic_DNA"/>
</dbReference>
<dbReference type="RefSeq" id="WP_012711200.1">
    <property type="nucleotide sequence ID" value="NC_012588.1"/>
</dbReference>
<dbReference type="SMR" id="C3MYG0"/>
<dbReference type="GeneID" id="84061503"/>
<dbReference type="KEGG" id="sia:M1425_1178"/>
<dbReference type="HOGENOM" id="CLU_031317_2_1_2"/>
<dbReference type="Proteomes" id="UP000001350">
    <property type="component" value="Chromosome"/>
</dbReference>
<dbReference type="GO" id="GO:0042781">
    <property type="term" value="F:3'-tRNA processing endoribonuclease activity"/>
    <property type="evidence" value="ECO:0007669"/>
    <property type="project" value="UniProtKB-UniRule"/>
</dbReference>
<dbReference type="GO" id="GO:0008270">
    <property type="term" value="F:zinc ion binding"/>
    <property type="evidence" value="ECO:0007669"/>
    <property type="project" value="UniProtKB-UniRule"/>
</dbReference>
<dbReference type="CDD" id="cd07717">
    <property type="entry name" value="RNaseZ_ZiPD-like_MBL-fold"/>
    <property type="match status" value="1"/>
</dbReference>
<dbReference type="FunFam" id="3.60.15.10:FF:000075">
    <property type="entry name" value="Ribonuclease Z"/>
    <property type="match status" value="1"/>
</dbReference>
<dbReference type="Gene3D" id="3.60.15.10">
    <property type="entry name" value="Ribonuclease Z/Hydroxyacylglutathione hydrolase-like"/>
    <property type="match status" value="1"/>
</dbReference>
<dbReference type="HAMAP" id="MF_01818">
    <property type="entry name" value="RNase_Z_BN"/>
    <property type="match status" value="1"/>
</dbReference>
<dbReference type="InterPro" id="IPR001279">
    <property type="entry name" value="Metallo-B-lactamas"/>
</dbReference>
<dbReference type="InterPro" id="IPR036866">
    <property type="entry name" value="RibonucZ/Hydroxyglut_hydro"/>
</dbReference>
<dbReference type="InterPro" id="IPR013471">
    <property type="entry name" value="RNase_Z/BN"/>
</dbReference>
<dbReference type="NCBIfam" id="NF000801">
    <property type="entry name" value="PRK00055.1-3"/>
    <property type="match status" value="1"/>
</dbReference>
<dbReference type="NCBIfam" id="TIGR02651">
    <property type="entry name" value="RNase_Z"/>
    <property type="match status" value="1"/>
</dbReference>
<dbReference type="PANTHER" id="PTHR46018">
    <property type="entry name" value="ZINC PHOSPHODIESTERASE ELAC PROTEIN 1"/>
    <property type="match status" value="1"/>
</dbReference>
<dbReference type="PANTHER" id="PTHR46018:SF2">
    <property type="entry name" value="ZINC PHOSPHODIESTERASE ELAC PROTEIN 1"/>
    <property type="match status" value="1"/>
</dbReference>
<dbReference type="Pfam" id="PF00753">
    <property type="entry name" value="Lactamase_B"/>
    <property type="match status" value="1"/>
</dbReference>
<dbReference type="Pfam" id="PF12706">
    <property type="entry name" value="Lactamase_B_2"/>
    <property type="match status" value="1"/>
</dbReference>
<dbReference type="SUPFAM" id="SSF56281">
    <property type="entry name" value="Metallo-hydrolase/oxidoreductase"/>
    <property type="match status" value="1"/>
</dbReference>
<evidence type="ECO:0000255" key="1">
    <source>
        <dbReference type="HAMAP-Rule" id="MF_01818"/>
    </source>
</evidence>
<comment type="function">
    <text evidence="1">Zinc phosphodiesterase, which displays some tRNA 3'-processing endonuclease activity. Probably involved in tRNA maturation, by removing a 3'-trailer from precursor tRNA.</text>
</comment>
<comment type="catalytic activity">
    <reaction evidence="1">
        <text>Endonucleolytic cleavage of RNA, removing extra 3' nucleotides from tRNA precursor, generating 3' termini of tRNAs. A 3'-hydroxy group is left at the tRNA terminus and a 5'-phosphoryl group is left at the trailer molecule.</text>
        <dbReference type="EC" id="3.1.26.11"/>
    </reaction>
</comment>
<comment type="cofactor">
    <cofactor evidence="1">
        <name>Zn(2+)</name>
        <dbReference type="ChEBI" id="CHEBI:29105"/>
    </cofactor>
    <text evidence="1">Binds 2 Zn(2+) ions.</text>
</comment>
<comment type="subunit">
    <text evidence="1">Homodimer.</text>
</comment>
<comment type="similarity">
    <text evidence="1">Belongs to the RNase Z family.</text>
</comment>
<reference key="1">
    <citation type="journal article" date="2009" name="Proc. Natl. Acad. Sci. U.S.A.">
        <title>Biogeography of the Sulfolobus islandicus pan-genome.</title>
        <authorList>
            <person name="Reno M.L."/>
            <person name="Held N.L."/>
            <person name="Fields C.J."/>
            <person name="Burke P.V."/>
            <person name="Whitaker R.J."/>
        </authorList>
    </citation>
    <scope>NUCLEOTIDE SEQUENCE [LARGE SCALE GENOMIC DNA]</scope>
    <source>
        <strain>M.14.25 / Kamchatka #1</strain>
    </source>
</reference>
<proteinExistence type="inferred from homology"/>
<organism>
    <name type="scientific">Saccharolobus islandicus (strain M.14.25 / Kamchatka #1)</name>
    <name type="common">Sulfolobus islandicus</name>
    <dbReference type="NCBI Taxonomy" id="427317"/>
    <lineage>
        <taxon>Archaea</taxon>
        <taxon>Thermoproteota</taxon>
        <taxon>Thermoprotei</taxon>
        <taxon>Sulfolobales</taxon>
        <taxon>Sulfolobaceae</taxon>
        <taxon>Saccharolobus</taxon>
    </lineage>
</organism>
<protein>
    <recommendedName>
        <fullName evidence="1">Ribonuclease Z</fullName>
        <shortName evidence="1">RNase Z</shortName>
        <ecNumber evidence="1">3.1.26.11</ecNumber>
    </recommendedName>
    <alternativeName>
        <fullName evidence="1">tRNA 3 endonuclease</fullName>
    </alternativeName>
    <alternativeName>
        <fullName evidence="1">tRNase Z</fullName>
    </alternativeName>
</protein>
<keyword id="KW-0255">Endonuclease</keyword>
<keyword id="KW-0378">Hydrolase</keyword>
<keyword id="KW-0479">Metal-binding</keyword>
<keyword id="KW-0540">Nuclease</keyword>
<keyword id="KW-0819">tRNA processing</keyword>
<keyword id="KW-0862">Zinc</keyword>
<name>RNZ_SACI4</name>
<feature type="chain" id="PRO_1000216017" description="Ribonuclease Z">
    <location>
        <begin position="1"/>
        <end position="291"/>
    </location>
</feature>
<feature type="active site" description="Proton acceptor" evidence="1">
    <location>
        <position position="65"/>
    </location>
</feature>
<feature type="binding site" evidence="1">
    <location>
        <position position="61"/>
    </location>
    <ligand>
        <name>Zn(2+)</name>
        <dbReference type="ChEBI" id="CHEBI:29105"/>
        <label>1</label>
        <note>catalytic</note>
    </ligand>
</feature>
<feature type="binding site" evidence="1">
    <location>
        <position position="63"/>
    </location>
    <ligand>
        <name>Zn(2+)</name>
        <dbReference type="ChEBI" id="CHEBI:29105"/>
        <label>1</label>
        <note>catalytic</note>
    </ligand>
</feature>
<feature type="binding site" evidence="1">
    <location>
        <position position="65"/>
    </location>
    <ligand>
        <name>Zn(2+)</name>
        <dbReference type="ChEBI" id="CHEBI:29105"/>
        <label>2</label>
        <note>catalytic</note>
    </ligand>
</feature>
<feature type="binding site" evidence="1">
    <location>
        <position position="66"/>
    </location>
    <ligand>
        <name>Zn(2+)</name>
        <dbReference type="ChEBI" id="CHEBI:29105"/>
        <label>2</label>
        <note>catalytic</note>
    </ligand>
</feature>
<feature type="binding site" evidence="1">
    <location>
        <position position="133"/>
    </location>
    <ligand>
        <name>Zn(2+)</name>
        <dbReference type="ChEBI" id="CHEBI:29105"/>
        <label>1</label>
        <note>catalytic</note>
    </ligand>
</feature>
<feature type="binding site" evidence="1">
    <location>
        <position position="201"/>
    </location>
    <ligand>
        <name>Zn(2+)</name>
        <dbReference type="ChEBI" id="CHEBI:29105"/>
        <label>1</label>
        <note>catalytic</note>
    </ligand>
</feature>
<feature type="binding site" evidence="1">
    <location>
        <position position="201"/>
    </location>
    <ligand>
        <name>Zn(2+)</name>
        <dbReference type="ChEBI" id="CHEBI:29105"/>
        <label>2</label>
        <note>catalytic</note>
    </ligand>
</feature>
<feature type="binding site" evidence="1">
    <location>
        <position position="257"/>
    </location>
    <ligand>
        <name>Zn(2+)</name>
        <dbReference type="ChEBI" id="CHEBI:29105"/>
        <label>2</label>
        <note>catalytic</note>
    </ligand>
</feature>
<gene>
    <name evidence="1" type="primary">rnz</name>
    <name type="ordered locus">M1425_1178</name>
</gene>
<sequence length="291" mass="32953">MIQIFFLGTGAGSPSKKRKLPAFLVRREGLNILLDCGEGTQYTLMNNKLGINSIKIIGITHMHGDHVFGLLGVIASMGLLDRKETLYILGPRDLKDFLYTSFEYSKFNPSFKIEFIDNYNDQNITIATFKTCHTVESQGYLISERDRVKIDEEKLEKEKIKDWRVMRKLKEGKTVEYNGKFLKPEDYLVIKRGLKVAYTGDTIPCQSVIESVKGVDLLIHDSTFLNEPSACTYGHSNVADAAKVALEASVKLLALTHISPRYEDVTEHLKVARRIFPKSILPDDLSYITLK</sequence>
<accession>C3MYG0</accession>